<protein>
    <recommendedName>
        <fullName evidence="1">DNA topoisomerase 1</fullName>
        <ecNumber evidence="1">5.6.2.1</ecNumber>
    </recommendedName>
    <alternativeName>
        <fullName evidence="1">DNA topoisomerase I</fullName>
    </alternativeName>
    <alternativeName>
        <fullName>Omega-protein</fullName>
    </alternativeName>
    <alternativeName>
        <fullName>Relaxing enzyme</fullName>
    </alternativeName>
    <alternativeName>
        <fullName>Swivelase</fullName>
    </alternativeName>
    <alternativeName>
        <fullName>Untwisting enzyme</fullName>
    </alternativeName>
</protein>
<proteinExistence type="inferred from homology"/>
<comment type="function">
    <text evidence="1">Releases the supercoiling and torsional tension of DNA, which is introduced during the DNA replication and transcription, by transiently cleaving and rejoining one strand of the DNA duplex. Introduces a single-strand break via transesterification at a target site in duplex DNA. The scissile phosphodiester is attacked by the catalytic tyrosine of the enzyme, resulting in the formation of a DNA-(5'-phosphotyrosyl)-enzyme intermediate and the expulsion of a 3'-OH DNA strand. The free DNA strand then undergoes passage around the unbroken strand, thus removing DNA supercoils. Finally, in the religation step, the DNA 3'-OH attacks the covalent intermediate to expel the active-site tyrosine and restore the DNA phosphodiester backbone.</text>
</comment>
<comment type="catalytic activity">
    <reaction evidence="1">
        <text>ATP-independent breakage of single-stranded DNA, followed by passage and rejoining.</text>
        <dbReference type="EC" id="5.6.2.1"/>
    </reaction>
</comment>
<comment type="cofactor">
    <cofactor evidence="1">
        <name>Mg(2+)</name>
        <dbReference type="ChEBI" id="CHEBI:18420"/>
    </cofactor>
</comment>
<comment type="subunit">
    <text evidence="1">Monomer.</text>
</comment>
<comment type="similarity">
    <text evidence="1">Belongs to the type IA topoisomerase family.</text>
</comment>
<reference key="1">
    <citation type="journal article" date="2005" name="PLoS Biol.">
        <title>The genome sequence of Rickettsia felis identifies the first putative conjugative plasmid in an obligate intracellular parasite.</title>
        <authorList>
            <person name="Ogata H."/>
            <person name="Renesto P."/>
            <person name="Audic S."/>
            <person name="Robert C."/>
            <person name="Blanc G."/>
            <person name="Fournier P.-E."/>
            <person name="Parinello H."/>
            <person name="Claverie J.-M."/>
            <person name="Raoult D."/>
        </authorList>
    </citation>
    <scope>NUCLEOTIDE SEQUENCE [LARGE SCALE GENOMIC DNA]</scope>
    <source>
        <strain>ATCC VR-1525 / URRWXCal2</strain>
    </source>
</reference>
<sequence>MKLVIVESPAKAKTINKYLGDEFKVIASFGHIRDLPSKKGSVLPDENFAMKYDISDKAGKYVDAIVKDAKKADAVYLATDPDREGEAISWHVAEVIKEKNKVKSDDFFKRVAFNEITKKAIIHAVENPRKLDANLVNAQQARRALDYLVGFTLSPLLWRKLPGCKSAGRVQSVALRLICEREDEIERFKSEEYWDISLKMQNSNNELFTAKLTHVNDQKLEKFSIINEKDAKDLTEKLKSQNFHVDKIEKKQQKRQPQPPFITSSLQQEAARKLGFSAKKTMQIAQKLYEGVDIGKETIGLITYMRTDGVTLSNDAIADIRKLIDKNYGDKYLPNSPRIYKSKVKNAQEAHEAIRPTNITYTPDSLKEKLEKDYYKLYELIWKRTIACQMENVIMDLVVASLASENKEYLAKANGSTIAFDGFYKVYRESVDDEAEEENKMLPPLKEQEPLKTKEIIPNQHFTEPPPRYSEASLVKKLEELGIGRPSTYASILSVLQDRKYVSLEKKRFMPEELGRLVTVFLVGFFKKYVEYDFTAGLENELDEIAAGKLEWKAALNNFWSGFNHNIESVNEQKITEIISYVQKALDYHLFSENKESKACPSCKTGELSLKLGKFGAFLACSNYPECTFRKSIVSGNDNNENDGDLAATPNENKVLGTDKDGIEIYLKKGPYGPYVQLGEQEGKVKPKRSPVPASLNQNDITLEMALKLLSLPLKIGIHKDSGEEIMIGYGKFGPYIKYMGKFISIPKKYDFLNLSLDDAMKLIEDNKAKLEKKQA</sequence>
<organism>
    <name type="scientific">Rickettsia felis (strain ATCC VR-1525 / URRWXCal2)</name>
    <name type="common">Rickettsia azadi</name>
    <dbReference type="NCBI Taxonomy" id="315456"/>
    <lineage>
        <taxon>Bacteria</taxon>
        <taxon>Pseudomonadati</taxon>
        <taxon>Pseudomonadota</taxon>
        <taxon>Alphaproteobacteria</taxon>
        <taxon>Rickettsiales</taxon>
        <taxon>Rickettsiaceae</taxon>
        <taxon>Rickettsieae</taxon>
        <taxon>Rickettsia</taxon>
        <taxon>spotted fever group</taxon>
    </lineage>
</organism>
<keyword id="KW-0238">DNA-binding</keyword>
<keyword id="KW-0413">Isomerase</keyword>
<keyword id="KW-0460">Magnesium</keyword>
<keyword id="KW-0479">Metal-binding</keyword>
<keyword id="KW-0799">Topoisomerase</keyword>
<keyword id="KW-0862">Zinc</keyword>
<keyword id="KW-0863">Zinc-finger</keyword>
<evidence type="ECO:0000255" key="1">
    <source>
        <dbReference type="HAMAP-Rule" id="MF_00952"/>
    </source>
</evidence>
<evidence type="ECO:0000255" key="2">
    <source>
        <dbReference type="PROSITE-ProRule" id="PRU01383"/>
    </source>
</evidence>
<feature type="chain" id="PRO_0000273105" description="DNA topoisomerase 1">
    <location>
        <begin position="1"/>
        <end position="776"/>
    </location>
</feature>
<feature type="domain" description="Toprim" evidence="1">
    <location>
        <begin position="1"/>
        <end position="111"/>
    </location>
</feature>
<feature type="domain" description="Topo IA-type catalytic" evidence="2">
    <location>
        <begin position="132"/>
        <end position="568"/>
    </location>
</feature>
<feature type="zinc finger region" description="C4-type">
    <location>
        <begin position="600"/>
        <end position="627"/>
    </location>
</feature>
<feature type="region of interest" description="Interaction with DNA" evidence="1">
    <location>
        <begin position="166"/>
        <end position="171"/>
    </location>
</feature>
<feature type="active site" description="O-(5'-phospho-DNA)-tyrosine intermediate" evidence="2">
    <location>
        <position position="304"/>
    </location>
</feature>
<feature type="binding site" evidence="1">
    <location>
        <position position="7"/>
    </location>
    <ligand>
        <name>Mg(2+)</name>
        <dbReference type="ChEBI" id="CHEBI:18420"/>
        <note>catalytic</note>
    </ligand>
</feature>
<feature type="binding site" evidence="1">
    <location>
        <position position="80"/>
    </location>
    <ligand>
        <name>Mg(2+)</name>
        <dbReference type="ChEBI" id="CHEBI:18420"/>
        <note>catalytic</note>
    </ligand>
</feature>
<feature type="site" description="Interaction with DNA" evidence="1">
    <location>
        <position position="31"/>
    </location>
</feature>
<feature type="site" description="Interaction with DNA" evidence="1">
    <location>
        <position position="142"/>
    </location>
</feature>
<feature type="site" description="Interaction with DNA" evidence="1">
    <location>
        <position position="143"/>
    </location>
</feature>
<feature type="site" description="Interaction with DNA" evidence="1">
    <location>
        <position position="146"/>
    </location>
</feature>
<feature type="site" description="Interaction with DNA" evidence="1">
    <location>
        <position position="158"/>
    </location>
</feature>
<feature type="site" description="Interaction with DNA" evidence="1">
    <location>
        <position position="306"/>
    </location>
</feature>
<feature type="site" description="Interaction with DNA" evidence="1">
    <location>
        <position position="499"/>
    </location>
</feature>
<accession>Q4UM42</accession>
<name>TOP1_RICFE</name>
<dbReference type="EC" id="5.6.2.1" evidence="1"/>
<dbReference type="EMBL" id="CP000053">
    <property type="protein sequence ID" value="AAY61381.1"/>
    <property type="molecule type" value="Genomic_DNA"/>
</dbReference>
<dbReference type="SMR" id="Q4UM42"/>
<dbReference type="STRING" id="315456.RF_0530"/>
<dbReference type="KEGG" id="rfe:RF_0530"/>
<dbReference type="eggNOG" id="COG0550">
    <property type="taxonomic scope" value="Bacteria"/>
</dbReference>
<dbReference type="HOGENOM" id="CLU_002929_4_3_5"/>
<dbReference type="OrthoDB" id="9804262at2"/>
<dbReference type="Proteomes" id="UP000008548">
    <property type="component" value="Chromosome"/>
</dbReference>
<dbReference type="GO" id="GO:0005694">
    <property type="term" value="C:chromosome"/>
    <property type="evidence" value="ECO:0007669"/>
    <property type="project" value="InterPro"/>
</dbReference>
<dbReference type="GO" id="GO:0003677">
    <property type="term" value="F:DNA binding"/>
    <property type="evidence" value="ECO:0007669"/>
    <property type="project" value="UniProtKB-KW"/>
</dbReference>
<dbReference type="GO" id="GO:0003917">
    <property type="term" value="F:DNA topoisomerase type I (single strand cut, ATP-independent) activity"/>
    <property type="evidence" value="ECO:0007669"/>
    <property type="project" value="UniProtKB-UniRule"/>
</dbReference>
<dbReference type="GO" id="GO:0008270">
    <property type="term" value="F:zinc ion binding"/>
    <property type="evidence" value="ECO:0007669"/>
    <property type="project" value="UniProtKB-KW"/>
</dbReference>
<dbReference type="GO" id="GO:0006265">
    <property type="term" value="P:DNA topological change"/>
    <property type="evidence" value="ECO:0007669"/>
    <property type="project" value="UniProtKB-UniRule"/>
</dbReference>
<dbReference type="CDD" id="cd00186">
    <property type="entry name" value="TOP1Ac"/>
    <property type="match status" value="1"/>
</dbReference>
<dbReference type="CDD" id="cd03363">
    <property type="entry name" value="TOPRIM_TopoIA_TopoI"/>
    <property type="match status" value="1"/>
</dbReference>
<dbReference type="Gene3D" id="3.40.50.140">
    <property type="match status" value="1"/>
</dbReference>
<dbReference type="Gene3D" id="3.30.65.10">
    <property type="entry name" value="Bacterial Topoisomerase I, domain 1"/>
    <property type="match status" value="1"/>
</dbReference>
<dbReference type="Gene3D" id="1.10.460.10">
    <property type="entry name" value="Topoisomerase I, domain 2"/>
    <property type="match status" value="1"/>
</dbReference>
<dbReference type="Gene3D" id="2.70.20.10">
    <property type="entry name" value="Topoisomerase I, domain 3"/>
    <property type="match status" value="1"/>
</dbReference>
<dbReference type="Gene3D" id="1.10.290.10">
    <property type="entry name" value="Topoisomerase I, domain 4"/>
    <property type="match status" value="1"/>
</dbReference>
<dbReference type="HAMAP" id="MF_00952">
    <property type="entry name" value="Topoisom_1_prok"/>
    <property type="match status" value="1"/>
</dbReference>
<dbReference type="InterPro" id="IPR000380">
    <property type="entry name" value="Topo_IA"/>
</dbReference>
<dbReference type="InterPro" id="IPR003601">
    <property type="entry name" value="Topo_IA_2"/>
</dbReference>
<dbReference type="InterPro" id="IPR023406">
    <property type="entry name" value="Topo_IA_AS"/>
</dbReference>
<dbReference type="InterPro" id="IPR013497">
    <property type="entry name" value="Topo_IA_cen"/>
</dbReference>
<dbReference type="InterPro" id="IPR013824">
    <property type="entry name" value="Topo_IA_cen_sub1"/>
</dbReference>
<dbReference type="InterPro" id="IPR013825">
    <property type="entry name" value="Topo_IA_cen_sub2"/>
</dbReference>
<dbReference type="InterPro" id="IPR013826">
    <property type="entry name" value="Topo_IA_cen_sub3"/>
</dbReference>
<dbReference type="InterPro" id="IPR023405">
    <property type="entry name" value="Topo_IA_core_domain"/>
</dbReference>
<dbReference type="InterPro" id="IPR003602">
    <property type="entry name" value="Topo_IA_DNA-bd_dom"/>
</dbReference>
<dbReference type="InterPro" id="IPR013498">
    <property type="entry name" value="Topo_IA_Znf"/>
</dbReference>
<dbReference type="InterPro" id="IPR005733">
    <property type="entry name" value="TopoI_bac-type"/>
</dbReference>
<dbReference type="InterPro" id="IPR028612">
    <property type="entry name" value="Topoisom_1_IA"/>
</dbReference>
<dbReference type="InterPro" id="IPR025589">
    <property type="entry name" value="Toprim_C_rpt"/>
</dbReference>
<dbReference type="InterPro" id="IPR006171">
    <property type="entry name" value="TOPRIM_dom"/>
</dbReference>
<dbReference type="InterPro" id="IPR034149">
    <property type="entry name" value="TOPRIM_TopoI"/>
</dbReference>
<dbReference type="NCBIfam" id="TIGR01051">
    <property type="entry name" value="topA_bact"/>
    <property type="match status" value="1"/>
</dbReference>
<dbReference type="PANTHER" id="PTHR42785:SF1">
    <property type="entry name" value="DNA TOPOISOMERASE"/>
    <property type="match status" value="1"/>
</dbReference>
<dbReference type="PANTHER" id="PTHR42785">
    <property type="entry name" value="DNA TOPOISOMERASE, TYPE IA, CORE"/>
    <property type="match status" value="1"/>
</dbReference>
<dbReference type="Pfam" id="PF01131">
    <property type="entry name" value="Topoisom_bac"/>
    <property type="match status" value="1"/>
</dbReference>
<dbReference type="Pfam" id="PF01751">
    <property type="entry name" value="Toprim"/>
    <property type="match status" value="1"/>
</dbReference>
<dbReference type="Pfam" id="PF13368">
    <property type="entry name" value="Toprim_C_rpt"/>
    <property type="match status" value="2"/>
</dbReference>
<dbReference type="Pfam" id="PF01396">
    <property type="entry name" value="Zn_ribbon_Top1"/>
    <property type="match status" value="1"/>
</dbReference>
<dbReference type="PRINTS" id="PR00417">
    <property type="entry name" value="PRTPISMRASEI"/>
</dbReference>
<dbReference type="SMART" id="SM00437">
    <property type="entry name" value="TOP1Ac"/>
    <property type="match status" value="1"/>
</dbReference>
<dbReference type="SMART" id="SM00436">
    <property type="entry name" value="TOP1Bc"/>
    <property type="match status" value="1"/>
</dbReference>
<dbReference type="SMART" id="SM00493">
    <property type="entry name" value="TOPRIM"/>
    <property type="match status" value="1"/>
</dbReference>
<dbReference type="SUPFAM" id="SSF56712">
    <property type="entry name" value="Prokaryotic type I DNA topoisomerase"/>
    <property type="match status" value="1"/>
</dbReference>
<dbReference type="SUPFAM" id="SSF57783">
    <property type="entry name" value="Zinc beta-ribbon"/>
    <property type="match status" value="1"/>
</dbReference>
<dbReference type="PROSITE" id="PS00396">
    <property type="entry name" value="TOPO_IA_1"/>
    <property type="match status" value="1"/>
</dbReference>
<dbReference type="PROSITE" id="PS52039">
    <property type="entry name" value="TOPO_IA_2"/>
    <property type="match status" value="1"/>
</dbReference>
<dbReference type="PROSITE" id="PS50880">
    <property type="entry name" value="TOPRIM"/>
    <property type="match status" value="1"/>
</dbReference>
<gene>
    <name evidence="1" type="primary">topA</name>
    <name type="ordered locus">RF_0530</name>
</gene>